<comment type="function">
    <text>May play a role in male fertility. May act as a retinoid carrier protein within the epididymis.</text>
</comment>
<comment type="subcellular location">
    <subcellularLocation>
        <location evidence="1">Secreted</location>
    </subcellularLocation>
</comment>
<comment type="tissue specificity">
    <text evidence="3">Predominantly expressed in epididymis.</text>
</comment>
<comment type="similarity">
    <text evidence="4">Belongs to the calycin superfamily. Lipocalin family.</text>
</comment>
<organism>
    <name type="scientific">Mus musculus</name>
    <name type="common">Mouse</name>
    <dbReference type="NCBI Taxonomy" id="10090"/>
    <lineage>
        <taxon>Eukaryota</taxon>
        <taxon>Metazoa</taxon>
        <taxon>Chordata</taxon>
        <taxon>Craniata</taxon>
        <taxon>Vertebrata</taxon>
        <taxon>Euteleostomi</taxon>
        <taxon>Mammalia</taxon>
        <taxon>Eutheria</taxon>
        <taxon>Euarchontoglires</taxon>
        <taxon>Glires</taxon>
        <taxon>Rodentia</taxon>
        <taxon>Myomorpha</taxon>
        <taxon>Muroidea</taxon>
        <taxon>Muridae</taxon>
        <taxon>Murinae</taxon>
        <taxon>Mus</taxon>
        <taxon>Mus</taxon>
    </lineage>
</organism>
<evidence type="ECO:0000250" key="1"/>
<evidence type="ECO:0000255" key="2"/>
<evidence type="ECO:0000269" key="3">
    <source>
    </source>
</evidence>
<evidence type="ECO:0000305" key="4"/>
<keyword id="KW-1015">Disulfide bond</keyword>
<keyword id="KW-0325">Glycoprotein</keyword>
<keyword id="KW-1185">Reference proteome</keyword>
<keyword id="KW-0964">Secreted</keyword>
<keyword id="KW-0732">Signal</keyword>
<keyword id="KW-0813">Transport</keyword>
<gene>
    <name type="primary">Lcn8</name>
</gene>
<dbReference type="EMBL" id="AF082221">
    <property type="protein sequence ID" value="AAK58105.1"/>
    <property type="molecule type" value="Genomic_DNA"/>
</dbReference>
<dbReference type="EMBL" id="BC048433">
    <property type="protein sequence ID" value="AAH48433.1"/>
    <property type="molecule type" value="mRNA"/>
</dbReference>
<dbReference type="CCDS" id="CCDS15786.1"/>
<dbReference type="RefSeq" id="NP_149157.1">
    <property type="nucleotide sequence ID" value="NM_033145.1"/>
</dbReference>
<dbReference type="SMR" id="Q924P3"/>
<dbReference type="STRING" id="10090.ENSMUSP00000043902"/>
<dbReference type="GlyCosmos" id="Q924P3">
    <property type="glycosylation" value="2 sites, No reported glycans"/>
</dbReference>
<dbReference type="GlyGen" id="Q924P3">
    <property type="glycosylation" value="2 sites"/>
</dbReference>
<dbReference type="PhosphoSitePlus" id="Q924P3"/>
<dbReference type="PaxDb" id="10090-ENSMUSP00000043902"/>
<dbReference type="ProteomicsDB" id="265049"/>
<dbReference type="Antibodypedia" id="32229">
    <property type="antibodies" value="104 antibodies from 19 providers"/>
</dbReference>
<dbReference type="DNASU" id="78076"/>
<dbReference type="Ensembl" id="ENSMUST00000038482.7">
    <property type="protein sequence ID" value="ENSMUSP00000043902.7"/>
    <property type="gene ID" value="ENSMUSG00000036449.7"/>
</dbReference>
<dbReference type="GeneID" id="78076"/>
<dbReference type="KEGG" id="mmu:78076"/>
<dbReference type="UCSC" id="uc008ita.1">
    <property type="organism name" value="mouse"/>
</dbReference>
<dbReference type="AGR" id="MGI:2135945"/>
<dbReference type="CTD" id="138307"/>
<dbReference type="MGI" id="MGI:2135945">
    <property type="gene designation" value="Lcn8"/>
</dbReference>
<dbReference type="VEuPathDB" id="HostDB:ENSMUSG00000036449"/>
<dbReference type="eggNOG" id="ENOG502TDU8">
    <property type="taxonomic scope" value="Eukaryota"/>
</dbReference>
<dbReference type="GeneTree" id="ENSGT01050000244868"/>
<dbReference type="HOGENOM" id="CLU_107634_0_0_1"/>
<dbReference type="InParanoid" id="Q924P3"/>
<dbReference type="OMA" id="RHGRCAE"/>
<dbReference type="OrthoDB" id="9627583at2759"/>
<dbReference type="PhylomeDB" id="Q924P3"/>
<dbReference type="TreeFam" id="TF337931"/>
<dbReference type="BioGRID-ORCS" id="78076">
    <property type="hits" value="1 hit in 79 CRISPR screens"/>
</dbReference>
<dbReference type="PRO" id="PR:Q924P3"/>
<dbReference type="Proteomes" id="UP000000589">
    <property type="component" value="Chromosome 2"/>
</dbReference>
<dbReference type="RNAct" id="Q924P3">
    <property type="molecule type" value="protein"/>
</dbReference>
<dbReference type="Bgee" id="ENSMUSG00000036449">
    <property type="expression patterns" value="Expressed in lumbar subsegment of spinal cord and 27 other cell types or tissues"/>
</dbReference>
<dbReference type="GO" id="GO:0005576">
    <property type="term" value="C:extracellular region"/>
    <property type="evidence" value="ECO:0007669"/>
    <property type="project" value="UniProtKB-SubCell"/>
</dbReference>
<dbReference type="GO" id="GO:0036094">
    <property type="term" value="F:small molecule binding"/>
    <property type="evidence" value="ECO:0007669"/>
    <property type="project" value="InterPro"/>
</dbReference>
<dbReference type="GO" id="GO:0009725">
    <property type="term" value="P:response to hormone"/>
    <property type="evidence" value="ECO:0000314"/>
    <property type="project" value="MGI"/>
</dbReference>
<dbReference type="CDD" id="cd19421">
    <property type="entry name" value="lipocalin_5_8-like"/>
    <property type="match status" value="1"/>
</dbReference>
<dbReference type="Gene3D" id="2.40.128.20">
    <property type="match status" value="1"/>
</dbReference>
<dbReference type="InterPro" id="IPR012674">
    <property type="entry name" value="Calycin"/>
</dbReference>
<dbReference type="InterPro" id="IPR002345">
    <property type="entry name" value="Lipocalin"/>
</dbReference>
<dbReference type="InterPro" id="IPR000566">
    <property type="entry name" value="Lipocln_cytosolic_FA-bd_dom"/>
</dbReference>
<dbReference type="PANTHER" id="PTHR11430:SF1">
    <property type="entry name" value="EPIDIDYMAL-SPECIFIC LIPOCALIN-8"/>
    <property type="match status" value="1"/>
</dbReference>
<dbReference type="PANTHER" id="PTHR11430">
    <property type="entry name" value="LIPOCALIN"/>
    <property type="match status" value="1"/>
</dbReference>
<dbReference type="Pfam" id="PF00061">
    <property type="entry name" value="Lipocalin"/>
    <property type="match status" value="1"/>
</dbReference>
<dbReference type="SUPFAM" id="SSF50814">
    <property type="entry name" value="Lipocalins"/>
    <property type="match status" value="1"/>
</dbReference>
<accession>Q924P3</accession>
<reference key="1">
    <citation type="journal article" date="2001" name="Endocrinology">
        <title>Gene duplication gives rise to a new 17-kilodalton lipocalin that shows epididymal region-specific expression and testicular factor(s) regulation.</title>
        <authorList>
            <person name="Lareyre J.-J."/>
            <person name="Winfrey V.P."/>
            <person name="Kasper S."/>
            <person name="Ong D.E."/>
            <person name="Matusik R.J."/>
            <person name="Olson G.E."/>
            <person name="Orgebin-Crist M.-C."/>
        </authorList>
    </citation>
    <scope>NUCLEOTIDE SEQUENCE [MRNA]</scope>
    <scope>TISSUE SPECIFICITY</scope>
    <source>
        <strain>129/SvJ</strain>
    </source>
</reference>
<reference key="2">
    <citation type="journal article" date="2004" name="Genome Res.">
        <title>The status, quality, and expansion of the NIH full-length cDNA project: the Mammalian Gene Collection (MGC).</title>
        <authorList>
            <consortium name="The MGC Project Team"/>
        </authorList>
    </citation>
    <scope>NUCLEOTIDE SEQUENCE [LARGE SCALE MRNA]</scope>
    <source>
        <tissue>Testis</tissue>
    </source>
</reference>
<sequence>MEARLLSNVCGFFLVFLLQAESTRVELVPEKIAGFWKEVAVASDQKLVLKAQRRVEGLFLTFSGGNVTVKAVYNSSGSCVTESSLGSERDTVGEFAFPGNREIHVLDTDYERYTILKLTLLWQGRNFHVLKYFTRSLENEDEPGFWLFREMTADQGLYMLARHGRCAELLKEGLV</sequence>
<name>LCN8_MOUSE</name>
<protein>
    <recommendedName>
        <fullName>Epididymal-specific lipocalin-8</fullName>
    </recommendedName>
    <alternativeName>
        <fullName>Epididymal 17 kDa lipocalin</fullName>
        <shortName>EP17</shortName>
        <shortName>mEP17</shortName>
    </alternativeName>
</protein>
<feature type="signal peptide" evidence="2">
    <location>
        <begin position="1"/>
        <end position="22"/>
    </location>
</feature>
<feature type="chain" id="PRO_0000017917" description="Epididymal-specific lipocalin-8">
    <location>
        <begin position="23"/>
        <end position="175"/>
    </location>
</feature>
<feature type="glycosylation site" description="N-linked (GlcNAc...) asparagine" evidence="2">
    <location>
        <position position="66"/>
    </location>
</feature>
<feature type="glycosylation site" description="N-linked (GlcNAc...) asparagine" evidence="2">
    <location>
        <position position="74"/>
    </location>
</feature>
<feature type="disulfide bond" evidence="1">
    <location>
        <begin position="79"/>
        <end position="166"/>
    </location>
</feature>
<proteinExistence type="evidence at transcript level"/>